<sequence>MAEKVPPGLNRKTSRSTLSLPPEPVDIIRSKTCSRRVKINVGGLNHEVLWRTLDRLPRTRLGKLRDCNTHESLLEVCDDYNLNENEYFFDRHPGAFTSILNFYRTGKLHMMEEMCALSFGQELDYWGIDEIYLESCCQARYHQKKEQMNEELRREAETMREREGEEFDNTCCPEKRKKLWDLLEKPNSSVAAKILAIVSILFIVLSTIALSLNTLPELQEMDEFGQPNDNPQLAHVEAVCIAWFTMEYLLRFLSSPNKWKFFKGPLNVIDLLAILPYYVTIFLTESNKSVLQFQNVRRVVQIFRIMRILRILKLARHSTGLQSLGFTLRRSYNELGLLILFLAMGIMIFSSLVFFAEKDEDATKFTSIPASFWWATITMTTVGYGDIYPKTLLGKIVGGLCCIAGVLVIALPIPIIVNNFSEFYKEQKRQEKAIKRREALERAKRNGSIVSMNLKDAFARSMELIDVAVEKTGESANTKGSTDDNHLSPSRWKWARKALSETSSNKSYENKYQEVSQKDSHEQLNNTSSSSPQHLSAQKLEMLYNEITKTQPHSHPNPDGQEQAERPSTYEEEIEMEEVVCPQEQLAVAQTEGVVDMKSTSSIDSFTSCATDFTETERSPLPPPSASHLQMKFPPDLAGLEEHQRARAPPFLALIRQKGPTVREATPEYAPIDITVNLDAAGGPQGGPHGPLPTDCASESPKSSLKGSNPLKSRSLKVNFKDSRGGAPPTPPSTARPLPVTAADFPLTAPQLISTILLEETPSQGDRPLLGAEVHCQGPSKGLTPRFPKQKLFTFSARERRSFTEIDTGEDDDFLELQGTRRPDKQADSSPNCLTDKPSDGRDPLREEACVGSSSAQDTSHNCRQGIYHGVAEVKKDNSQEGCKMENHLFAPEIHSNPGDTGYCPTRETSM</sequence>
<name>KCNB2_BOVIN</name>
<reference key="1">
    <citation type="submission" date="2005-04" db="EMBL/GenBank/DDBJ databases">
        <title>Ion channels in ocular epithelia.</title>
        <authorList>
            <person name="Rae J.L."/>
        </authorList>
    </citation>
    <scope>NUCLEOTIDE SEQUENCE [MRNA]</scope>
    <source>
        <tissue>Lens epithelium</tissue>
    </source>
</reference>
<reference key="2">
    <citation type="journal article" date="1999" name="Ann. N. Y. Acad. Sci.">
        <title>Molecular diversity of K+ channels.</title>
        <authorList>
            <person name="Coetzee W.A."/>
            <person name="Amarillo Y."/>
            <person name="Chiu J."/>
            <person name="Chow A."/>
            <person name="Lau D."/>
            <person name="McCormack T."/>
            <person name="Moreno H."/>
            <person name="Nadal M.S."/>
            <person name="Ozaita A."/>
            <person name="Pountney D."/>
            <person name="Saganich M."/>
            <person name="Vega-Saenz de Miera E."/>
            <person name="Rudy B."/>
        </authorList>
    </citation>
    <scope>REVIEW</scope>
</reference>
<evidence type="ECO:0000250" key="1">
    <source>
        <dbReference type="UniProtKB" id="A6H8H5"/>
    </source>
</evidence>
<evidence type="ECO:0000250" key="2">
    <source>
        <dbReference type="UniProtKB" id="P63142"/>
    </source>
</evidence>
<evidence type="ECO:0000250" key="3">
    <source>
        <dbReference type="UniProtKB" id="Q63099"/>
    </source>
</evidence>
<evidence type="ECO:0000250" key="4">
    <source>
        <dbReference type="UniProtKB" id="Q92953"/>
    </source>
</evidence>
<evidence type="ECO:0000250" key="5">
    <source>
        <dbReference type="UniProtKB" id="Q95167"/>
    </source>
</evidence>
<evidence type="ECO:0000255" key="6"/>
<evidence type="ECO:0000256" key="7">
    <source>
        <dbReference type="SAM" id="MobiDB-lite"/>
    </source>
</evidence>
<evidence type="ECO:0000305" key="8"/>
<evidence type="ECO:0000305" key="9">
    <source>
    </source>
</evidence>
<dbReference type="EMBL" id="DQ009866">
    <property type="protein sequence ID" value="AAY26233.1"/>
    <property type="molecule type" value="mRNA"/>
</dbReference>
<dbReference type="RefSeq" id="NP_001019734.1">
    <property type="nucleotide sequence ID" value="NM_001024563.1"/>
</dbReference>
<dbReference type="SMR" id="Q4ZHA6"/>
<dbReference type="FunCoup" id="Q4ZHA6">
    <property type="interactions" value="367"/>
</dbReference>
<dbReference type="STRING" id="9913.ENSBTAP00000051715"/>
<dbReference type="GlyCosmos" id="Q4ZHA6">
    <property type="glycosylation" value="1 site, No reported glycans"/>
</dbReference>
<dbReference type="GlyGen" id="Q4ZHA6">
    <property type="glycosylation" value="1 site"/>
</dbReference>
<dbReference type="PaxDb" id="9913-ENSBTAP00000051715"/>
<dbReference type="Ensembl" id="ENSBTAT00000053147.4">
    <property type="protein sequence ID" value="ENSBTAP00000051715.3"/>
    <property type="gene ID" value="ENSBTAG00000040496.4"/>
</dbReference>
<dbReference type="GeneID" id="535990"/>
<dbReference type="KEGG" id="bta:535990"/>
<dbReference type="CTD" id="9312"/>
<dbReference type="VEuPathDB" id="HostDB:ENSBTAG00000040496"/>
<dbReference type="VGNC" id="VGNC:30431">
    <property type="gene designation" value="KCNB2"/>
</dbReference>
<dbReference type="eggNOG" id="KOG3713">
    <property type="taxonomic scope" value="Eukaryota"/>
</dbReference>
<dbReference type="GeneTree" id="ENSGT00940000161902"/>
<dbReference type="InParanoid" id="Q4ZHA6"/>
<dbReference type="OMA" id="AHENHIG"/>
<dbReference type="OrthoDB" id="296522at2759"/>
<dbReference type="Reactome" id="R-BTA-1296072">
    <property type="pathway name" value="Voltage gated Potassium channels"/>
</dbReference>
<dbReference type="Proteomes" id="UP000009136">
    <property type="component" value="Chromosome 14"/>
</dbReference>
<dbReference type="Bgee" id="ENSBTAG00000040496">
    <property type="expression patterns" value="Expressed in fornix of vagina and 54 other cell types or tissues"/>
</dbReference>
<dbReference type="GO" id="GO:0030425">
    <property type="term" value="C:dendrite"/>
    <property type="evidence" value="ECO:0000250"/>
    <property type="project" value="UniProtKB"/>
</dbReference>
<dbReference type="GO" id="GO:0016020">
    <property type="term" value="C:membrane"/>
    <property type="evidence" value="ECO:0000318"/>
    <property type="project" value="GO_Central"/>
</dbReference>
<dbReference type="GO" id="GO:0043025">
    <property type="term" value="C:neuronal cell body"/>
    <property type="evidence" value="ECO:0000318"/>
    <property type="project" value="GO_Central"/>
</dbReference>
<dbReference type="GO" id="GO:0032809">
    <property type="term" value="C:neuronal cell body membrane"/>
    <property type="evidence" value="ECO:0000250"/>
    <property type="project" value="UniProtKB"/>
</dbReference>
<dbReference type="GO" id="GO:0043204">
    <property type="term" value="C:perikaryon"/>
    <property type="evidence" value="ECO:0007669"/>
    <property type="project" value="UniProtKB-SubCell"/>
</dbReference>
<dbReference type="GO" id="GO:0005886">
    <property type="term" value="C:plasma membrane"/>
    <property type="evidence" value="ECO:0000250"/>
    <property type="project" value="UniProtKB"/>
</dbReference>
<dbReference type="GO" id="GO:0008076">
    <property type="term" value="C:voltage-gated potassium channel complex"/>
    <property type="evidence" value="ECO:0000250"/>
    <property type="project" value="UniProtKB"/>
</dbReference>
<dbReference type="GO" id="GO:0005251">
    <property type="term" value="F:delayed rectifier potassium channel activity"/>
    <property type="evidence" value="ECO:0000250"/>
    <property type="project" value="UniProtKB"/>
</dbReference>
<dbReference type="GO" id="GO:0015459">
    <property type="term" value="F:potassium channel regulator activity"/>
    <property type="evidence" value="ECO:0000318"/>
    <property type="project" value="GO_Central"/>
</dbReference>
<dbReference type="GO" id="GO:0046982">
    <property type="term" value="F:protein heterodimerization activity"/>
    <property type="evidence" value="ECO:0000250"/>
    <property type="project" value="UniProtKB"/>
</dbReference>
<dbReference type="GO" id="GO:0001508">
    <property type="term" value="P:action potential"/>
    <property type="evidence" value="ECO:0000318"/>
    <property type="project" value="GO_Central"/>
</dbReference>
<dbReference type="GO" id="GO:0071805">
    <property type="term" value="P:potassium ion transmembrane transport"/>
    <property type="evidence" value="ECO:0000250"/>
    <property type="project" value="UniProtKB"/>
</dbReference>
<dbReference type="GO" id="GO:0006813">
    <property type="term" value="P:potassium ion transport"/>
    <property type="evidence" value="ECO:0000250"/>
    <property type="project" value="UniProtKB"/>
</dbReference>
<dbReference type="GO" id="GO:0051260">
    <property type="term" value="P:protein homooligomerization"/>
    <property type="evidence" value="ECO:0007669"/>
    <property type="project" value="InterPro"/>
</dbReference>
<dbReference type="GO" id="GO:0072659">
    <property type="term" value="P:protein localization to plasma membrane"/>
    <property type="evidence" value="ECO:0000250"/>
    <property type="project" value="UniProtKB"/>
</dbReference>
<dbReference type="CDD" id="cd18412">
    <property type="entry name" value="BTB_POZ_KCNB2"/>
    <property type="match status" value="1"/>
</dbReference>
<dbReference type="FunFam" id="1.10.287.70:FF:000034">
    <property type="entry name" value="Potassium voltage-gated channel subfamily B member"/>
    <property type="match status" value="1"/>
</dbReference>
<dbReference type="FunFam" id="1.20.120.350:FF:000018">
    <property type="entry name" value="Potassium voltage-gated channel subfamily B member"/>
    <property type="match status" value="1"/>
</dbReference>
<dbReference type="FunFam" id="3.30.710.10:FF:000010">
    <property type="entry name" value="Potassium voltage-gated channel subfamily B member"/>
    <property type="match status" value="1"/>
</dbReference>
<dbReference type="Gene3D" id="1.10.287.70">
    <property type="match status" value="1"/>
</dbReference>
<dbReference type="Gene3D" id="3.30.710.10">
    <property type="entry name" value="Potassium Channel Kv1.1, Chain A"/>
    <property type="match status" value="1"/>
</dbReference>
<dbReference type="Gene3D" id="1.20.120.350">
    <property type="entry name" value="Voltage-gated potassium channels. Chain C"/>
    <property type="match status" value="1"/>
</dbReference>
<dbReference type="InterPro" id="IPR000210">
    <property type="entry name" value="BTB/POZ_dom"/>
</dbReference>
<dbReference type="InterPro" id="IPR005821">
    <property type="entry name" value="Ion_trans_dom"/>
</dbReference>
<dbReference type="InterPro" id="IPR003968">
    <property type="entry name" value="K_chnl_volt-dep_Kv"/>
</dbReference>
<dbReference type="InterPro" id="IPR003973">
    <property type="entry name" value="K_chnl_volt-dep_Kv2"/>
</dbReference>
<dbReference type="InterPro" id="IPR005826">
    <property type="entry name" value="K_chnl_volt-dep_Kv2.2"/>
</dbReference>
<dbReference type="InterPro" id="IPR011333">
    <property type="entry name" value="SKP1/BTB/POZ_sf"/>
</dbReference>
<dbReference type="InterPro" id="IPR003131">
    <property type="entry name" value="T1-type_BTB"/>
</dbReference>
<dbReference type="InterPro" id="IPR028325">
    <property type="entry name" value="VG_K_chnl"/>
</dbReference>
<dbReference type="InterPro" id="IPR027359">
    <property type="entry name" value="Volt_channel_dom_sf"/>
</dbReference>
<dbReference type="PANTHER" id="PTHR11537:SF134">
    <property type="entry name" value="POTASSIUM VOLTAGE-GATED CHANNEL SUBFAMILY B MEMBER 2"/>
    <property type="match status" value="1"/>
</dbReference>
<dbReference type="PANTHER" id="PTHR11537">
    <property type="entry name" value="VOLTAGE-GATED POTASSIUM CHANNEL"/>
    <property type="match status" value="1"/>
</dbReference>
<dbReference type="Pfam" id="PF02214">
    <property type="entry name" value="BTB_2"/>
    <property type="match status" value="1"/>
</dbReference>
<dbReference type="Pfam" id="PF00520">
    <property type="entry name" value="Ion_trans"/>
    <property type="match status" value="1"/>
</dbReference>
<dbReference type="Pfam" id="PF03521">
    <property type="entry name" value="Kv2channel"/>
    <property type="match status" value="1"/>
</dbReference>
<dbReference type="PRINTS" id="PR00169">
    <property type="entry name" value="KCHANNEL"/>
</dbReference>
<dbReference type="PRINTS" id="PR01515">
    <property type="entry name" value="KV22CHANNEL"/>
</dbReference>
<dbReference type="PRINTS" id="PR01491">
    <property type="entry name" value="KVCHANNEL"/>
</dbReference>
<dbReference type="PRINTS" id="PR01495">
    <property type="entry name" value="SHABCHANNEL"/>
</dbReference>
<dbReference type="SMART" id="SM00225">
    <property type="entry name" value="BTB"/>
    <property type="match status" value="1"/>
</dbReference>
<dbReference type="SUPFAM" id="SSF54695">
    <property type="entry name" value="POZ domain"/>
    <property type="match status" value="1"/>
</dbReference>
<dbReference type="SUPFAM" id="SSF81324">
    <property type="entry name" value="Voltage-gated potassium channels"/>
    <property type="match status" value="1"/>
</dbReference>
<protein>
    <recommendedName>
        <fullName evidence="4">Potassium voltage-gated channel subfamily B member 2</fullName>
    </recommendedName>
</protein>
<accession>Q4ZHA6</accession>
<keyword id="KW-1003">Cell membrane</keyword>
<keyword id="KW-0966">Cell projection</keyword>
<keyword id="KW-0325">Glycoprotein</keyword>
<keyword id="KW-0407">Ion channel</keyword>
<keyword id="KW-0406">Ion transport</keyword>
<keyword id="KW-0472">Membrane</keyword>
<keyword id="KW-0597">Phosphoprotein</keyword>
<keyword id="KW-0630">Potassium</keyword>
<keyword id="KW-0631">Potassium channel</keyword>
<keyword id="KW-0633">Potassium transport</keyword>
<keyword id="KW-1185">Reference proteome</keyword>
<keyword id="KW-0812">Transmembrane</keyword>
<keyword id="KW-1133">Transmembrane helix</keyword>
<keyword id="KW-0813">Transport</keyword>
<keyword id="KW-0851">Voltage-gated channel</keyword>
<gene>
    <name evidence="4" type="primary">KCNB2</name>
</gene>
<feature type="chain" id="PRO_0000248277" description="Potassium voltage-gated channel subfamily B member 2">
    <location>
        <begin position="1"/>
        <end position="911"/>
    </location>
</feature>
<feature type="topological domain" description="Cytoplasmic" evidence="2">
    <location>
        <begin position="1"/>
        <end position="190"/>
    </location>
</feature>
<feature type="transmembrane region" description="Helical; Name=Segment S1" evidence="2">
    <location>
        <begin position="191"/>
        <end position="212"/>
    </location>
</feature>
<feature type="topological domain" description="Extracellular" evidence="2">
    <location>
        <begin position="213"/>
        <end position="232"/>
    </location>
</feature>
<feature type="transmembrane region" description="Helical; Name=Segment S2" evidence="2">
    <location>
        <begin position="233"/>
        <end position="254"/>
    </location>
</feature>
<feature type="topological domain" description="Cytoplasmic" evidence="2">
    <location>
        <begin position="255"/>
        <end position="265"/>
    </location>
</feature>
<feature type="transmembrane region" description="Helical; Name=Segment S3" evidence="2">
    <location>
        <begin position="266"/>
        <end position="284"/>
    </location>
</feature>
<feature type="topological domain" description="Extracellular" evidence="2">
    <location>
        <begin position="285"/>
        <end position="296"/>
    </location>
</feature>
<feature type="transmembrane region" description="Helical; Voltage-sensor; Name=Segment S4" evidence="2">
    <location>
        <begin position="297"/>
        <end position="317"/>
    </location>
</feature>
<feature type="topological domain" description="Cytoplasmic" evidence="2">
    <location>
        <begin position="318"/>
        <end position="332"/>
    </location>
</feature>
<feature type="transmembrane region" description="Helical; Name=Segment S5" evidence="2">
    <location>
        <begin position="333"/>
        <end position="354"/>
    </location>
</feature>
<feature type="topological domain" description="Extracellular" evidence="2">
    <location>
        <begin position="355"/>
        <end position="368"/>
    </location>
</feature>
<feature type="intramembrane region" description="Helical; Name=Pore helix" evidence="2">
    <location>
        <begin position="369"/>
        <end position="380"/>
    </location>
</feature>
<feature type="intramembrane region" evidence="2">
    <location>
        <begin position="381"/>
        <end position="388"/>
    </location>
</feature>
<feature type="topological domain" description="Extracellular" evidence="2">
    <location>
        <begin position="389"/>
        <end position="395"/>
    </location>
</feature>
<feature type="transmembrane region" description="Helical; Name=Segment S6" evidence="2">
    <location>
        <begin position="396"/>
        <end position="424"/>
    </location>
</feature>
<feature type="topological domain" description="Cytoplasmic" evidence="2">
    <location>
        <begin position="425"/>
        <end position="911"/>
    </location>
</feature>
<feature type="region of interest" description="Disordered" evidence="7">
    <location>
        <begin position="1"/>
        <end position="21"/>
    </location>
</feature>
<feature type="region of interest" description="Disordered" evidence="7">
    <location>
        <begin position="503"/>
        <end position="534"/>
    </location>
</feature>
<feature type="region of interest" description="Disordered" evidence="7">
    <location>
        <begin position="549"/>
        <end position="571"/>
    </location>
</feature>
<feature type="region of interest" description="Disordered" evidence="7">
    <location>
        <begin position="677"/>
        <end position="742"/>
    </location>
</feature>
<feature type="region of interest" description="Disordered" evidence="7">
    <location>
        <begin position="804"/>
        <end position="861"/>
    </location>
</feature>
<feature type="short sequence motif" description="Selectivity filter" evidence="2">
    <location>
        <begin position="381"/>
        <end position="386"/>
    </location>
</feature>
<feature type="short sequence motif" description="FFAT" evidence="4">
    <location>
        <begin position="605"/>
        <end position="611"/>
    </location>
</feature>
<feature type="compositionally biased region" description="Basic and acidic residues" evidence="7">
    <location>
        <begin position="508"/>
        <end position="522"/>
    </location>
</feature>
<feature type="compositionally biased region" description="Polar residues" evidence="7">
    <location>
        <begin position="523"/>
        <end position="534"/>
    </location>
</feature>
<feature type="compositionally biased region" description="Polar residues" evidence="7">
    <location>
        <begin position="700"/>
        <end position="712"/>
    </location>
</feature>
<feature type="compositionally biased region" description="Basic and acidic residues" evidence="7">
    <location>
        <begin position="837"/>
        <end position="849"/>
    </location>
</feature>
<feature type="compositionally biased region" description="Polar residues" evidence="7">
    <location>
        <begin position="852"/>
        <end position="861"/>
    </location>
</feature>
<feature type="modified residue" description="Phosphoserine" evidence="3">
    <location>
        <position position="448"/>
    </location>
</feature>
<feature type="modified residue" description="Phosphoserine" evidence="4">
    <location>
        <position position="608"/>
    </location>
</feature>
<feature type="glycosylation site" description="N-linked (GlcNAc...) asparagine" evidence="6">
    <location>
        <position position="287"/>
    </location>
</feature>
<organism>
    <name type="scientific">Bos taurus</name>
    <name type="common">Bovine</name>
    <dbReference type="NCBI Taxonomy" id="9913"/>
    <lineage>
        <taxon>Eukaryota</taxon>
        <taxon>Metazoa</taxon>
        <taxon>Chordata</taxon>
        <taxon>Craniata</taxon>
        <taxon>Vertebrata</taxon>
        <taxon>Euteleostomi</taxon>
        <taxon>Mammalia</taxon>
        <taxon>Eutheria</taxon>
        <taxon>Laurasiatheria</taxon>
        <taxon>Artiodactyla</taxon>
        <taxon>Ruminantia</taxon>
        <taxon>Pecora</taxon>
        <taxon>Bovidae</taxon>
        <taxon>Bovinae</taxon>
        <taxon>Bos</taxon>
    </lineage>
</organism>
<proteinExistence type="evidence at transcript level"/>
<comment type="function">
    <text evidence="1 3">Voltage-gated potassium channel that mediates transmembrane potassium transport in excitable membranes, primarily in the brain and smooth muscle cells. Channels open or close in response to the voltage difference across the membrane, letting potassium ions pass in accordance with their electrochemical gradient. Homotetrameric channels mediate a delayed-rectifier voltage-dependent outward potassium current that display rapid activation and slow inactivation in response to membrane depolarization. Can form functional homotetrameric and heterotetrameric channels that contain variable proportions of KCNB1; channel properties depend on the type of alpha subunits that are part of the channel. Can also form functional heterotetrameric channels with other alpha subunits that are non-conducting when expressed alone, such as KCNS1 and KCNS2, creating a functionally diverse range of channel complexes. In vivo, membranes probably contain a mixture of heteromeric potassium channel complexes, making it difficult to assign currents observed in intact tissues to any particular potassium channel family member. Contributes to the delayed-rectifier voltage-gated potassium current in cortical pyramidal neurons and smooth muscle cells.</text>
</comment>
<comment type="catalytic activity">
    <reaction evidence="3">
        <text>K(+)(in) = K(+)(out)</text>
        <dbReference type="Rhea" id="RHEA:29463"/>
        <dbReference type="ChEBI" id="CHEBI:29103"/>
    </reaction>
</comment>
<comment type="activity regulation">
    <text evidence="3 5 9">Inhibited by quinine at micromolar levels. Modestly sensitive to millimolar levels of tetraethylammonium (TEA) and 4-aminopyridine (4-AP).</text>
</comment>
<comment type="biophysicochemical properties">
    <kinetics>
        <text evidence="9">Homotetrameric channels expressed in xenopus oocytes or in mammalian non-neuronal cells display delayed-rectifier voltage-dependent potassium currents which are activated during membrane depolarization, i.e within a risetime of about 20 msec. After that, inactivate very slowly. Their activation requires low threshold potentials of about -20 to -30 mV, with a midpoint activation at about 10 mV. For inactivation, the voltage at half-maximal amplitude is about -30 mV. Channels have an unitary conductance of about 14 pS. The voltage-dependence of activation and inactivation and other channel characteristics vary depending on the experimental conditions, the expression system and post-translational modifications.</text>
    </kinetics>
</comment>
<comment type="subunit">
    <text evidence="3 4">Homotetramer or heterotetramer with KCNB1. Heterotetramer with KCNS1 and KCNS2 (By similarity). Interacts (via phosphorylated FFAT motif) with VAPA and VAPB (By similarity).</text>
</comment>
<comment type="subcellular location">
    <subcellularLocation>
        <location evidence="3">Cell membrane</location>
        <topology evidence="3">Multi-pass membrane protein</topology>
    </subcellularLocation>
    <subcellularLocation>
        <location evidence="3">Perikaryon</location>
    </subcellularLocation>
    <subcellularLocation>
        <location evidence="3">Cell projection</location>
        <location evidence="3">Dendrite</location>
    </subcellularLocation>
    <text evidence="3">Localized uniformly throughout cell bodies and dendrites. Colocalizes with KCNB1 to high-density somatodendritic clusters on cortical pyramidal neurons.</text>
</comment>
<comment type="domain">
    <text evidence="2">The transmembrane segment S4 functions as a voltage-sensor and is characterized by a series of positively charged amino acids at every third position. Channel opening and closing is effected by a conformation change that affects the position and orientation of the voltage-sensor paddle formed by S3 and S4 within the membrane. A transmembrane electric field that is positive inside would push the positively charged S4 segment outwards, thereby opening the pore, while a field that is negative inside would pull the S4 segment inwards and close the pore. Changes in the position and orientation of S4 are then transmitted to the activation gate formed by the inner helix bundle via the S4-S5 linker region.</text>
</comment>
<comment type="PTM">
    <text evidence="3 4">Phosphorylated (By similarity). Phosphorylation at Ser-608 of the FFAT motif activates interaction with MOSPD2, VAPA and VAPB (By similarity).</text>
</comment>
<comment type="similarity">
    <text evidence="8">Belongs to the potassium channel family. B (Shab) (TC 1.A.1.2) subfamily. Kv2.2/KCNB2 sub-subfamily.</text>
</comment>